<proteinExistence type="inferred from homology"/>
<evidence type="ECO:0000255" key="1">
    <source>
        <dbReference type="HAMAP-Rule" id="MF_00272"/>
    </source>
</evidence>
<evidence type="ECO:0000255" key="2">
    <source>
        <dbReference type="PROSITE-ProRule" id="PRU01066"/>
    </source>
</evidence>
<name>GCSH_SYNS9</name>
<organism>
    <name type="scientific">Synechococcus sp. (strain CC9902)</name>
    <dbReference type="NCBI Taxonomy" id="316279"/>
    <lineage>
        <taxon>Bacteria</taxon>
        <taxon>Bacillati</taxon>
        <taxon>Cyanobacteriota</taxon>
        <taxon>Cyanophyceae</taxon>
        <taxon>Synechococcales</taxon>
        <taxon>Synechococcaceae</taxon>
        <taxon>Synechococcus</taxon>
    </lineage>
</organism>
<accession>Q3AUL9</accession>
<dbReference type="EMBL" id="CP000097">
    <property type="protein sequence ID" value="ABB27147.1"/>
    <property type="molecule type" value="Genomic_DNA"/>
</dbReference>
<dbReference type="RefSeq" id="WP_009788682.1">
    <property type="nucleotide sequence ID" value="NC_007513.1"/>
</dbReference>
<dbReference type="SMR" id="Q3AUL9"/>
<dbReference type="STRING" id="316279.Syncc9902_2189"/>
<dbReference type="KEGG" id="sye:Syncc9902_2189"/>
<dbReference type="eggNOG" id="COG0509">
    <property type="taxonomic scope" value="Bacteria"/>
</dbReference>
<dbReference type="HOGENOM" id="CLU_097408_2_2_3"/>
<dbReference type="OrthoDB" id="9796712at2"/>
<dbReference type="Proteomes" id="UP000002712">
    <property type="component" value="Chromosome"/>
</dbReference>
<dbReference type="GO" id="GO:0005829">
    <property type="term" value="C:cytosol"/>
    <property type="evidence" value="ECO:0007669"/>
    <property type="project" value="TreeGrafter"/>
</dbReference>
<dbReference type="GO" id="GO:0005960">
    <property type="term" value="C:glycine cleavage complex"/>
    <property type="evidence" value="ECO:0007669"/>
    <property type="project" value="InterPro"/>
</dbReference>
<dbReference type="GO" id="GO:0019464">
    <property type="term" value="P:glycine decarboxylation via glycine cleavage system"/>
    <property type="evidence" value="ECO:0007669"/>
    <property type="project" value="UniProtKB-UniRule"/>
</dbReference>
<dbReference type="CDD" id="cd06848">
    <property type="entry name" value="GCS_H"/>
    <property type="match status" value="1"/>
</dbReference>
<dbReference type="Gene3D" id="2.40.50.100">
    <property type="match status" value="1"/>
</dbReference>
<dbReference type="HAMAP" id="MF_00272">
    <property type="entry name" value="GcvH"/>
    <property type="match status" value="1"/>
</dbReference>
<dbReference type="InterPro" id="IPR003016">
    <property type="entry name" value="2-oxoA_DH_lipoyl-BS"/>
</dbReference>
<dbReference type="InterPro" id="IPR000089">
    <property type="entry name" value="Biotin_lipoyl"/>
</dbReference>
<dbReference type="InterPro" id="IPR002930">
    <property type="entry name" value="GCV_H"/>
</dbReference>
<dbReference type="InterPro" id="IPR033753">
    <property type="entry name" value="GCV_H/Fam206"/>
</dbReference>
<dbReference type="InterPro" id="IPR017453">
    <property type="entry name" value="GCV_H_sub"/>
</dbReference>
<dbReference type="InterPro" id="IPR011053">
    <property type="entry name" value="Single_hybrid_motif"/>
</dbReference>
<dbReference type="NCBIfam" id="TIGR00527">
    <property type="entry name" value="gcvH"/>
    <property type="match status" value="1"/>
</dbReference>
<dbReference type="NCBIfam" id="NF002270">
    <property type="entry name" value="PRK01202.1"/>
    <property type="match status" value="1"/>
</dbReference>
<dbReference type="PANTHER" id="PTHR11715">
    <property type="entry name" value="GLYCINE CLEAVAGE SYSTEM H PROTEIN"/>
    <property type="match status" value="1"/>
</dbReference>
<dbReference type="PANTHER" id="PTHR11715:SF3">
    <property type="entry name" value="GLYCINE CLEAVAGE SYSTEM H PROTEIN-RELATED"/>
    <property type="match status" value="1"/>
</dbReference>
<dbReference type="Pfam" id="PF01597">
    <property type="entry name" value="GCV_H"/>
    <property type="match status" value="1"/>
</dbReference>
<dbReference type="SUPFAM" id="SSF51230">
    <property type="entry name" value="Single hybrid motif"/>
    <property type="match status" value="1"/>
</dbReference>
<dbReference type="PROSITE" id="PS50968">
    <property type="entry name" value="BIOTINYL_LIPOYL"/>
    <property type="match status" value="1"/>
</dbReference>
<dbReference type="PROSITE" id="PS00189">
    <property type="entry name" value="LIPOYL"/>
    <property type="match status" value="1"/>
</dbReference>
<keyword id="KW-0450">Lipoyl</keyword>
<keyword id="KW-1185">Reference proteome</keyword>
<protein>
    <recommendedName>
        <fullName evidence="1">Glycine cleavage system H protein</fullName>
    </recommendedName>
</protein>
<feature type="chain" id="PRO_0000302450" description="Glycine cleavage system H protein">
    <location>
        <begin position="1"/>
        <end position="129"/>
    </location>
</feature>
<feature type="domain" description="Lipoyl-binding" evidence="2">
    <location>
        <begin position="24"/>
        <end position="106"/>
    </location>
</feature>
<feature type="modified residue" description="N6-lipoyllysine" evidence="1">
    <location>
        <position position="65"/>
    </location>
</feature>
<comment type="function">
    <text evidence="1">The glycine cleavage system catalyzes the degradation of glycine. The H protein shuttles the methylamine group of glycine from the P protein to the T protein.</text>
</comment>
<comment type="cofactor">
    <cofactor evidence="1">
        <name>(R)-lipoate</name>
        <dbReference type="ChEBI" id="CHEBI:83088"/>
    </cofactor>
    <text evidence="1">Binds 1 lipoyl cofactor covalently.</text>
</comment>
<comment type="subunit">
    <text evidence="1">The glycine cleavage system is composed of four proteins: P, T, L and H.</text>
</comment>
<comment type="similarity">
    <text evidence="1">Belongs to the GcvH family.</text>
</comment>
<sequence>MAFEFPAAYRFADSHEYAHLDGELIRVGISAFAVDQLGDIVFVDLPDVGASLDKGTSFGSVESVKAVEDMYAPIAGEVVERNEAVLASPEELQNDPHGAGWLLVVRPSDPAQLETLLDSATYSAKVNAG</sequence>
<reference key="1">
    <citation type="submission" date="2005-08" db="EMBL/GenBank/DDBJ databases">
        <title>Complete sequence of Synechococcus sp. CC9902.</title>
        <authorList>
            <person name="Copeland A."/>
            <person name="Lucas S."/>
            <person name="Lapidus A."/>
            <person name="Barry K."/>
            <person name="Detter J.C."/>
            <person name="Glavina T."/>
            <person name="Hammon N."/>
            <person name="Israni S."/>
            <person name="Pitluck S."/>
            <person name="Martinez M."/>
            <person name="Schmutz J."/>
            <person name="Larimer F."/>
            <person name="Land M."/>
            <person name="Kyrpides N."/>
            <person name="Ivanova N."/>
            <person name="Richardson P."/>
        </authorList>
    </citation>
    <scope>NUCLEOTIDE SEQUENCE [LARGE SCALE GENOMIC DNA]</scope>
    <source>
        <strain>CC9902</strain>
    </source>
</reference>
<gene>
    <name evidence="1" type="primary">gcvH</name>
    <name type="ordered locus">Syncc9902_2189</name>
</gene>